<evidence type="ECO:0000269" key="1">
    <source>
    </source>
</evidence>
<evidence type="ECO:0000303" key="2">
    <source>
    </source>
</evidence>
<keyword id="KW-0903">Direct protein sequencing</keyword>
<comment type="tissue specificity">
    <text evidence="1">Nacreous layer of shell.</text>
</comment>
<protein>
    <recommendedName>
        <fullName evidence="2">Uncharacterized protein IMPP10</fullName>
    </recommendedName>
</protein>
<name>IMP10_NAUMA</name>
<proteinExistence type="evidence at protein level"/>
<accession>P85397</accession>
<reference key="1">
    <citation type="journal article" date="2009" name="ChemBioChem">
        <title>Evolution of nacre: biochemistry and 'shellomics' of the shell organic matrix of the cephalopod Nautilus macromphalus.</title>
        <authorList>
            <person name="Marie B."/>
            <person name="Marin F."/>
            <person name="Marie A."/>
            <person name="Bedouet L."/>
            <person name="Dubost L."/>
            <person name="Alcaraz G."/>
            <person name="Milet C."/>
            <person name="Luquet G."/>
        </authorList>
    </citation>
    <scope>PROTEIN SEQUENCE</scope>
    <scope>TISSUE SPECIFICITY</scope>
    <source>
        <tissue>Shell</tissue>
    </source>
</reference>
<organism>
    <name type="scientific">Nautilus macromphalus</name>
    <name type="common">Bellybutton nautilus</name>
    <dbReference type="NCBI Taxonomy" id="34576"/>
    <lineage>
        <taxon>Eukaryota</taxon>
        <taxon>Metazoa</taxon>
        <taxon>Spiralia</taxon>
        <taxon>Lophotrochozoa</taxon>
        <taxon>Mollusca</taxon>
        <taxon>Cephalopoda</taxon>
        <taxon>Nautiloidea</taxon>
        <taxon>Nautilida</taxon>
        <taxon>Nautilidae</taxon>
        <taxon>Nautilus</taxon>
    </lineage>
</organism>
<feature type="chain" id="PRO_0000371471" description="Uncharacterized protein IMPP10">
    <location>
        <begin position="1" status="less than"/>
        <end position="12" status="greater than"/>
    </location>
</feature>
<feature type="unsure residue" description="L or I" evidence="1">
    <location>
        <position position="7"/>
    </location>
</feature>
<feature type="unsure residue" description="L or I" evidence="1">
    <location>
        <position position="8"/>
    </location>
</feature>
<feature type="unsure residue" description="L or I" evidence="1">
    <location>
        <position position="10"/>
    </location>
</feature>
<feature type="non-terminal residue" evidence="2">
    <location>
        <position position="1"/>
    </location>
</feature>
<feature type="non-terminal residue" evidence="2">
    <location>
        <position position="12"/>
    </location>
</feature>
<sequence>NSTMNSLLQLGR</sequence>